<proteinExistence type="evidence at transcript level"/>
<name>CYP1A_MYCMD</name>
<dbReference type="EC" id="1.-.-.-" evidence="5"/>
<dbReference type="EMBL" id="CM003162">
    <property type="protein sequence ID" value="KIS65759.1"/>
    <property type="molecule type" value="Genomic_DNA"/>
</dbReference>
<dbReference type="RefSeq" id="XP_011392749.1">
    <property type="nucleotide sequence ID" value="XM_011394447.1"/>
</dbReference>
<dbReference type="SMR" id="A0A0D1DMJ7"/>
<dbReference type="STRING" id="237631.A0A0D1DMJ7"/>
<dbReference type="GlyCosmos" id="A0A0D1DMJ7">
    <property type="glycosylation" value="2 sites, No reported glycans"/>
</dbReference>
<dbReference type="EnsemblFungi" id="KIS65759">
    <property type="protein sequence ID" value="KIS65759"/>
    <property type="gene ID" value="UMAG_11812"/>
</dbReference>
<dbReference type="GeneID" id="23567650"/>
<dbReference type="KEGG" id="uma:UMAG_11812"/>
<dbReference type="VEuPathDB" id="FungiDB:UMAG_11812"/>
<dbReference type="eggNOG" id="KOG0157">
    <property type="taxonomic scope" value="Eukaryota"/>
</dbReference>
<dbReference type="InParanoid" id="A0A0D1DMJ7"/>
<dbReference type="OrthoDB" id="1470350at2759"/>
<dbReference type="Proteomes" id="UP000000561">
    <property type="component" value="Chromosome 23"/>
</dbReference>
<dbReference type="GO" id="GO:0016020">
    <property type="term" value="C:membrane"/>
    <property type="evidence" value="ECO:0007669"/>
    <property type="project" value="UniProtKB-SubCell"/>
</dbReference>
<dbReference type="GO" id="GO:0020037">
    <property type="term" value="F:heme binding"/>
    <property type="evidence" value="ECO:0007669"/>
    <property type="project" value="InterPro"/>
</dbReference>
<dbReference type="GO" id="GO:0005506">
    <property type="term" value="F:iron ion binding"/>
    <property type="evidence" value="ECO:0007669"/>
    <property type="project" value="InterPro"/>
</dbReference>
<dbReference type="GO" id="GO:0004497">
    <property type="term" value="F:monooxygenase activity"/>
    <property type="evidence" value="ECO:0007669"/>
    <property type="project" value="UniProtKB-KW"/>
</dbReference>
<dbReference type="GO" id="GO:0016705">
    <property type="term" value="F:oxidoreductase activity, acting on paired donors, with incorporation or reduction of molecular oxygen"/>
    <property type="evidence" value="ECO:0007669"/>
    <property type="project" value="InterPro"/>
</dbReference>
<dbReference type="GO" id="GO:0006629">
    <property type="term" value="P:lipid metabolic process"/>
    <property type="evidence" value="ECO:0007669"/>
    <property type="project" value="UniProtKB-ARBA"/>
</dbReference>
<dbReference type="Gene3D" id="1.10.630.10">
    <property type="entry name" value="Cytochrome P450"/>
    <property type="match status" value="1"/>
</dbReference>
<dbReference type="InterPro" id="IPR001128">
    <property type="entry name" value="Cyt_P450"/>
</dbReference>
<dbReference type="InterPro" id="IPR017972">
    <property type="entry name" value="Cyt_P450_CS"/>
</dbReference>
<dbReference type="InterPro" id="IPR002401">
    <property type="entry name" value="Cyt_P450_E_grp-I"/>
</dbReference>
<dbReference type="InterPro" id="IPR036396">
    <property type="entry name" value="Cyt_P450_sf"/>
</dbReference>
<dbReference type="PANTHER" id="PTHR24296">
    <property type="entry name" value="CYTOCHROME P450"/>
    <property type="match status" value="1"/>
</dbReference>
<dbReference type="Pfam" id="PF00067">
    <property type="entry name" value="p450"/>
    <property type="match status" value="1"/>
</dbReference>
<dbReference type="PRINTS" id="PR00463">
    <property type="entry name" value="EP450I"/>
</dbReference>
<dbReference type="PRINTS" id="PR00385">
    <property type="entry name" value="P450"/>
</dbReference>
<dbReference type="SUPFAM" id="SSF48264">
    <property type="entry name" value="Cytochrome P450"/>
    <property type="match status" value="1"/>
</dbReference>
<dbReference type="PROSITE" id="PS00086">
    <property type="entry name" value="CYTOCHROME_P450"/>
    <property type="match status" value="1"/>
</dbReference>
<keyword id="KW-0325">Glycoprotein</keyword>
<keyword id="KW-0349">Heme</keyword>
<keyword id="KW-0408">Iron</keyword>
<keyword id="KW-0472">Membrane</keyword>
<keyword id="KW-0479">Metal-binding</keyword>
<keyword id="KW-0503">Monooxygenase</keyword>
<keyword id="KW-0560">Oxidoreductase</keyword>
<keyword id="KW-1185">Reference proteome</keyword>
<keyword id="KW-0812">Transmembrane</keyword>
<keyword id="KW-1133">Transmembrane helix</keyword>
<gene>
    <name evidence="8" type="primary">cyp1</name>
    <name type="ORF">UMAG_11812</name>
</gene>
<feature type="chain" id="PRO_0000452757" description="Cytochrome P450 monooxygenase cyp1">
    <location>
        <begin position="1"/>
        <end position="640"/>
    </location>
</feature>
<feature type="transmembrane region" description="Helical" evidence="2">
    <location>
        <begin position="120"/>
        <end position="139"/>
    </location>
</feature>
<feature type="binding site" description="axial binding residue" evidence="1">
    <location>
        <position position="572"/>
    </location>
    <ligand>
        <name>heme</name>
        <dbReference type="ChEBI" id="CHEBI:30413"/>
    </ligand>
    <ligandPart>
        <name>Fe</name>
        <dbReference type="ChEBI" id="CHEBI:18248"/>
    </ligandPart>
</feature>
<feature type="glycosylation site" description="N-linked (GlcNAc...) asparagine" evidence="3">
    <location>
        <position position="71"/>
    </location>
</feature>
<feature type="glycosylation site" description="N-linked (GlcNAc...) asparagine" evidence="3">
    <location>
        <position position="350"/>
    </location>
</feature>
<reference key="1">
    <citation type="journal article" date="2006" name="Nature">
        <title>Insights from the genome of the biotrophic fungal plant pathogen Ustilago maydis.</title>
        <authorList>
            <person name="Kaemper J."/>
            <person name="Kahmann R."/>
            <person name="Boelker M."/>
            <person name="Ma L.-J."/>
            <person name="Brefort T."/>
            <person name="Saville B.J."/>
            <person name="Banuett F."/>
            <person name="Kronstad J.W."/>
            <person name="Gold S.E."/>
            <person name="Mueller O."/>
            <person name="Perlin M.H."/>
            <person name="Woesten H.A.B."/>
            <person name="de Vries R."/>
            <person name="Ruiz-Herrera J."/>
            <person name="Reynaga-Pena C.G."/>
            <person name="Snetselaar K."/>
            <person name="McCann M."/>
            <person name="Perez-Martin J."/>
            <person name="Feldbruegge M."/>
            <person name="Basse C.W."/>
            <person name="Steinberg G."/>
            <person name="Ibeas J.I."/>
            <person name="Holloman W."/>
            <person name="Guzman P."/>
            <person name="Farman M.L."/>
            <person name="Stajich J.E."/>
            <person name="Sentandreu R."/>
            <person name="Gonzalez-Prieto J.M."/>
            <person name="Kennell J.C."/>
            <person name="Molina L."/>
            <person name="Schirawski J."/>
            <person name="Mendoza-Mendoza A."/>
            <person name="Greilinger D."/>
            <person name="Muench K."/>
            <person name="Roessel N."/>
            <person name="Scherer M."/>
            <person name="Vranes M."/>
            <person name="Ladendorf O."/>
            <person name="Vincon V."/>
            <person name="Fuchs U."/>
            <person name="Sandrock B."/>
            <person name="Meng S."/>
            <person name="Ho E.C.H."/>
            <person name="Cahill M.J."/>
            <person name="Boyce K.J."/>
            <person name="Klose J."/>
            <person name="Klosterman S.J."/>
            <person name="Deelstra H.J."/>
            <person name="Ortiz-Castellanos L."/>
            <person name="Li W."/>
            <person name="Sanchez-Alonso P."/>
            <person name="Schreier P.H."/>
            <person name="Haeuser-Hahn I."/>
            <person name="Vaupel M."/>
            <person name="Koopmann E."/>
            <person name="Friedrich G."/>
            <person name="Voss H."/>
            <person name="Schlueter T."/>
            <person name="Margolis J."/>
            <person name="Platt D."/>
            <person name="Swimmer C."/>
            <person name="Gnirke A."/>
            <person name="Chen F."/>
            <person name="Vysotskaia V."/>
            <person name="Mannhaupt G."/>
            <person name="Gueldener U."/>
            <person name="Muensterkoetter M."/>
            <person name="Haase D."/>
            <person name="Oesterheld M."/>
            <person name="Mewes H.-W."/>
            <person name="Mauceli E.W."/>
            <person name="DeCaprio D."/>
            <person name="Wade C.M."/>
            <person name="Butler J."/>
            <person name="Young S.K."/>
            <person name="Jaffe D.B."/>
            <person name="Calvo S.E."/>
            <person name="Nusbaum C."/>
            <person name="Galagan J.E."/>
            <person name="Birren B.W."/>
        </authorList>
    </citation>
    <scope>NUCLEOTIDE SEQUENCE [LARGE SCALE GENOMIC DNA]</scope>
    <source>
        <strain>DSM 14603 / FGSC 9021 / UM521</strain>
    </source>
</reference>
<reference key="2">
    <citation type="submission" date="2014-09" db="EMBL/GenBank/DDBJ databases">
        <authorList>
            <person name="Gueldener U."/>
            <person name="Muensterkoetter M."/>
            <person name="Walter M.C."/>
            <person name="Mannhaupt G."/>
            <person name="Kahmann R."/>
        </authorList>
    </citation>
    <scope>GENOME REANNOTATION</scope>
    <source>
        <strain>DSM 14603 / FGSC 9021 / UM521</strain>
    </source>
</reference>
<reference key="3">
    <citation type="journal article" date="2005" name="Appl. Environ. Microbiol.">
        <title>Genetic analysis of biosurfactant production in Ustilago maydis.</title>
        <authorList>
            <person name="Hewald S."/>
            <person name="Josephs K."/>
            <person name="Boelker M."/>
        </authorList>
    </citation>
    <scope>FUNCTION</scope>
    <scope>DISRUPTION PHENOTYPE</scope>
    <scope>INDUCTION</scope>
</reference>
<reference key="4">
    <citation type="journal article" date="2007" name="Mol. Microbiol.">
        <title>A biosynthetic gene cluster for a secreted cellobiose lipid with antifungal activity from Ustilago maydis.</title>
        <authorList>
            <person name="Teichmann B."/>
            <person name="Linne U."/>
            <person name="Hewald S."/>
            <person name="Marahiel M.A."/>
            <person name="Boelker M."/>
        </authorList>
    </citation>
    <scope>FUNCTION</scope>
    <scope>PATHWAY</scope>
</reference>
<reference key="5">
    <citation type="journal article" date="2010" name="Appl. Environ. Microbiol.">
        <title>Activation of the ustilagic acid biosynthesis gene cluster in Ustilago maydis by the C2H2 zinc finger transcription factor Rua1.</title>
        <authorList>
            <person name="Teichmann B."/>
            <person name="Liu L."/>
            <person name="Schink K.O."/>
            <person name="Boelker M."/>
        </authorList>
    </citation>
    <scope>INDUCTION</scope>
</reference>
<reference key="6">
    <citation type="journal article" date="2013" name="FEMS Yeast Res.">
        <title>Accumulation of cellobiose lipids under nitrogen-limiting conditions by two ustilaginomycetous yeasts, Pseudozyma aphidis and Pseudozyma hubeiensis.</title>
        <authorList>
            <person name="Morita T."/>
            <person name="Fukuoka T."/>
            <person name="Imura T."/>
            <person name="Kitamoto D."/>
        </authorList>
    </citation>
    <scope>FUNCTION</scope>
</reference>
<comment type="function">
    <text evidence="4 5 7 10">Cytochrome P450 monooxygenase; part of the gene cluster that mediates the biosynthesis of the glycolipid biosurfactant ustilagic acid (UA) (PubMed:15932999, PubMed:17850255, PubMed:22985214). UA is a secreted cellobiose glycolipid that is toxic for many microorganisms and confers biocontrol activity to U.maydis (PubMed:15932999, PubMed:17850255, PubMed:22985214). UA consists of 15,16-dihydroxypalmitic or 2,15,16-trihydroxypalmitic acid, which is O-glycosidically linked to cellobiose at its terminal hydroxyl group (PubMed:17850255). In addition, the cellobiose moiety is acetylated and acylated with a short-chain hydroxy fatty acid (PubMed:17850255). UA biosynthesis starts with omega-hydroxylation of palmitic acid catalyzed by the cytochrome P450 monooxygenase cyp1 (PubMed:17850255). Terminal hydroxylation of palmitic acid precedes subterminal hydroxylation catalyzed by the cytochrome P450 monooxygenase cyp2 (PubMed:17850255). Sequential glucosylation of the hydroxy fatty acid is probably catalyzed by the glycosyltransferase ugt1 (Probable). The cellobiose lipid is further decorated by acetylation of the proximal glucose residue and by acylation with a short-chain beta-hydroxy fatty acid at the distal glucose residue (Probable). The acyltransferase uat1 may be a good candidate for catalyzing either acetylation or acylation of the cellobiose lipid (Probable). The fatty acid synthase fas2 may be involved in synthesis of the carbon backbone of the short-chain beta-hydroxy fatty acid esterified to the cellobiose disaccharide (Probable). The secreted UA consists of a mixture of both alpha-hydroxylated and non-hydroxylated glycolipids; therefore, alpha-hydroxylation of the long-chain fatty, catalyzed by the fatty acid hydroxylase ahd1, occurs late in UA biosynthesis and may be the last step before secretion (PubMed:17850255).</text>
</comment>
<comment type="cofactor">
    <cofactor evidence="1">
        <name>heme</name>
        <dbReference type="ChEBI" id="CHEBI:30413"/>
    </cofactor>
</comment>
<comment type="pathway">
    <text evidence="5">Secondary metabolite biosynthesis.</text>
</comment>
<comment type="subcellular location">
    <subcellularLocation>
        <location evidence="2">Membrane</location>
        <topology evidence="2">Single-pass membrane protein</topology>
    </subcellularLocation>
</comment>
<comment type="induction">
    <text evidence="4 6">Expression is strongly induced under conditions of nitrogen starvation (PubMed:15932999). Expression is positively regulated by the cluster-specific transcription factor rua1 that recognizes and binds to the specific 5'-T/G-G/T-C-G-C-A-T-A/T-C/T-C/T-G/A-3' upstream activating sequence found in all promoters of the UA biosynthesis genes (PubMed:20173069).</text>
</comment>
<comment type="disruption phenotype">
    <text evidence="4">Results in complete loss of ustilagic acid production.</text>
</comment>
<comment type="similarity">
    <text evidence="9">Belongs to the cytochrome P450 family.</text>
</comment>
<sequence length="640" mass="73435">MRQRADVEVGPLKSGLLFSYMQNFCALQTRLRRPSRTTELDTMDFKPFLTLQHFRPQGFAGDVLAPGASYNQTWNTMASKFNGRGGNRVETGKVLEAASESLKETVPLLQLVVRARHHPLLVFLVGLFLGTIYLLYRYWDCAVGCERRPDLKGPKGLPLIGNLMWALKNRDPLSYQVYAQQKYGYGNTHTLPGLGRLIDISRPDWIEHVQKIKFSNYVKGEQFHDQMRDVLGDGIFTSDGERWKMQRKVASRIFTVSSFKAIITQTIREDCALVEQLIETYARQGTVFNLQELYFKFTLSSFVKIAFSQDIKSLSEPDRPDTFGDAFNYAQKVLDMRFVQPWWKIAERFNETGRKMRAARKIVEEFTTNIVEARRKESEAMGEKSKPESSRKDLLDLFMAYRSSDGQRLSNQQLKDTILNLMIAGRDTTAEALSWMSWHMLTKPDVYDRIRHEIDATLEEEGEQAGLEIDYDVFEQHTAKLTTFQETLRLHPSIPKNIRRALQDDVLPNGGPRVRKGDLMLYSDWAMGRNPDIWGPDACEFKPSRWTDQETGSSIKYSQFQAHFFNGGPRLCLGQKLASYEVVQLIHHIFAKFDLELIDLGPGRSAGFGKVPDYLNSLTHPMKRPLMVKATLRCCKEGTR</sequence>
<evidence type="ECO:0000250" key="1">
    <source>
        <dbReference type="UniProtKB" id="P04798"/>
    </source>
</evidence>
<evidence type="ECO:0000255" key="2"/>
<evidence type="ECO:0000255" key="3">
    <source>
        <dbReference type="PROSITE-ProRule" id="PRU00498"/>
    </source>
</evidence>
<evidence type="ECO:0000269" key="4">
    <source>
    </source>
</evidence>
<evidence type="ECO:0000269" key="5">
    <source>
    </source>
</evidence>
<evidence type="ECO:0000269" key="6">
    <source>
    </source>
</evidence>
<evidence type="ECO:0000269" key="7">
    <source>
    </source>
</evidence>
<evidence type="ECO:0000303" key="8">
    <source>
    </source>
</evidence>
<evidence type="ECO:0000305" key="9"/>
<evidence type="ECO:0000305" key="10">
    <source>
    </source>
</evidence>
<accession>A0A0D1DMJ7</accession>
<organism>
    <name type="scientific">Mycosarcoma maydis</name>
    <name type="common">Corn smut fungus</name>
    <name type="synonym">Ustilago maydis</name>
    <dbReference type="NCBI Taxonomy" id="5270"/>
    <lineage>
        <taxon>Eukaryota</taxon>
        <taxon>Fungi</taxon>
        <taxon>Dikarya</taxon>
        <taxon>Basidiomycota</taxon>
        <taxon>Ustilaginomycotina</taxon>
        <taxon>Ustilaginomycetes</taxon>
        <taxon>Ustilaginales</taxon>
        <taxon>Ustilaginaceae</taxon>
        <taxon>Mycosarcoma</taxon>
    </lineage>
</organism>
<protein>
    <recommendedName>
        <fullName evidence="8">Cytochrome P450 monooxygenase cyp1</fullName>
        <ecNumber evidence="5">1.-.-.-</ecNumber>
    </recommendedName>
    <alternativeName>
        <fullName evidence="8">Ustilagic acid biosynthesis cluster protein cyp1</fullName>
    </alternativeName>
</protein>